<proteinExistence type="evidence at protein level"/>
<accession>P9WKF3</accession>
<accession>L0T5I2</accession>
<accession>P65209</accession>
<accession>P96371</accession>
<keyword id="KW-1003">Cell membrane</keyword>
<keyword id="KW-0406">Ion transport</keyword>
<keyword id="KW-0472">Membrane</keyword>
<keyword id="KW-0630">Potassium</keyword>
<keyword id="KW-0633">Potassium transport</keyword>
<keyword id="KW-1185">Reference proteome</keyword>
<keyword id="KW-0812">Transmembrane</keyword>
<keyword id="KW-1133">Transmembrane helix</keyword>
<keyword id="KW-0813">Transport</keyword>
<evidence type="ECO:0000255" key="1">
    <source>
        <dbReference type="HAMAP-Rule" id="MF_00275"/>
    </source>
</evidence>
<protein>
    <recommendedName>
        <fullName evidence="1">Potassium-transporting ATPase potassium-binding subunit</fullName>
    </recommendedName>
    <alternativeName>
        <fullName evidence="1">ATP phosphohydrolase [potassium-transporting] A chain</fullName>
    </alternativeName>
    <alternativeName>
        <fullName evidence="1">Potassium-binding and translocating subunit A</fullName>
    </alternativeName>
    <alternativeName>
        <fullName evidence="1">Potassium-translocating ATPase A chain</fullName>
    </alternativeName>
</protein>
<feature type="chain" id="PRO_0000166509" description="Potassium-transporting ATPase potassium-binding subunit">
    <location>
        <begin position="1"/>
        <end position="571"/>
    </location>
</feature>
<feature type="transmembrane region" description="Helical" evidence="1">
    <location>
        <begin position="7"/>
        <end position="27"/>
    </location>
</feature>
<feature type="transmembrane region" description="Helical" evidence="1">
    <location>
        <begin position="66"/>
        <end position="86"/>
    </location>
</feature>
<feature type="transmembrane region" description="Helical" evidence="1">
    <location>
        <begin position="137"/>
        <end position="157"/>
    </location>
</feature>
<feature type="transmembrane region" description="Helical" evidence="1">
    <location>
        <begin position="188"/>
        <end position="208"/>
    </location>
</feature>
<feature type="transmembrane region" description="Helical" evidence="1">
    <location>
        <begin position="255"/>
        <end position="275"/>
    </location>
</feature>
<feature type="transmembrane region" description="Helical" evidence="1">
    <location>
        <begin position="286"/>
        <end position="306"/>
    </location>
</feature>
<feature type="transmembrane region" description="Helical" evidence="1">
    <location>
        <begin position="390"/>
        <end position="410"/>
    </location>
</feature>
<feature type="transmembrane region" description="Helical" evidence="1">
    <location>
        <begin position="430"/>
        <end position="450"/>
    </location>
</feature>
<feature type="transmembrane region" description="Helical" evidence="1">
    <location>
        <begin position="497"/>
        <end position="517"/>
    </location>
</feature>
<feature type="transmembrane region" description="Helical" evidence="1">
    <location>
        <begin position="538"/>
        <end position="558"/>
    </location>
</feature>
<gene>
    <name evidence="1" type="primary">kdpA</name>
    <name type="ordered locus">Rv1029</name>
    <name type="ORF">MTCY10G2.20c</name>
</gene>
<organism>
    <name type="scientific">Mycobacterium tuberculosis (strain ATCC 25618 / H37Rv)</name>
    <dbReference type="NCBI Taxonomy" id="83332"/>
    <lineage>
        <taxon>Bacteria</taxon>
        <taxon>Bacillati</taxon>
        <taxon>Actinomycetota</taxon>
        <taxon>Actinomycetes</taxon>
        <taxon>Mycobacteriales</taxon>
        <taxon>Mycobacteriaceae</taxon>
        <taxon>Mycobacterium</taxon>
        <taxon>Mycobacterium tuberculosis complex</taxon>
    </lineage>
</organism>
<reference key="1">
    <citation type="journal article" date="1998" name="Nature">
        <title>Deciphering the biology of Mycobacterium tuberculosis from the complete genome sequence.</title>
        <authorList>
            <person name="Cole S.T."/>
            <person name="Brosch R."/>
            <person name="Parkhill J."/>
            <person name="Garnier T."/>
            <person name="Churcher C.M."/>
            <person name="Harris D.E."/>
            <person name="Gordon S.V."/>
            <person name="Eiglmeier K."/>
            <person name="Gas S."/>
            <person name="Barry C.E. III"/>
            <person name="Tekaia F."/>
            <person name="Badcock K."/>
            <person name="Basham D."/>
            <person name="Brown D."/>
            <person name="Chillingworth T."/>
            <person name="Connor R."/>
            <person name="Davies R.M."/>
            <person name="Devlin K."/>
            <person name="Feltwell T."/>
            <person name="Gentles S."/>
            <person name="Hamlin N."/>
            <person name="Holroyd S."/>
            <person name="Hornsby T."/>
            <person name="Jagels K."/>
            <person name="Krogh A."/>
            <person name="McLean J."/>
            <person name="Moule S."/>
            <person name="Murphy L.D."/>
            <person name="Oliver S."/>
            <person name="Osborne J."/>
            <person name="Quail M.A."/>
            <person name="Rajandream M.A."/>
            <person name="Rogers J."/>
            <person name="Rutter S."/>
            <person name="Seeger K."/>
            <person name="Skelton S."/>
            <person name="Squares S."/>
            <person name="Squares R."/>
            <person name="Sulston J.E."/>
            <person name="Taylor K."/>
            <person name="Whitehead S."/>
            <person name="Barrell B.G."/>
        </authorList>
    </citation>
    <scope>NUCLEOTIDE SEQUENCE [LARGE SCALE GENOMIC DNA]</scope>
    <source>
        <strain>ATCC 25618 / H37Rv</strain>
    </source>
</reference>
<reference key="2">
    <citation type="journal article" date="2011" name="Mol. Cell. Proteomics">
        <title>Proteogenomic analysis of Mycobacterium tuberculosis by high resolution mass spectrometry.</title>
        <authorList>
            <person name="Kelkar D.S."/>
            <person name="Kumar D."/>
            <person name="Kumar P."/>
            <person name="Balakrishnan L."/>
            <person name="Muthusamy B."/>
            <person name="Yadav A.K."/>
            <person name="Shrivastava P."/>
            <person name="Marimuthu A."/>
            <person name="Anand S."/>
            <person name="Sundaram H."/>
            <person name="Kingsbury R."/>
            <person name="Harsha H.C."/>
            <person name="Nair B."/>
            <person name="Prasad T.S."/>
            <person name="Chauhan D.S."/>
            <person name="Katoch K."/>
            <person name="Katoch V.M."/>
            <person name="Kumar P."/>
            <person name="Chaerkady R."/>
            <person name="Ramachandran S."/>
            <person name="Dash D."/>
            <person name="Pandey A."/>
        </authorList>
    </citation>
    <scope>IDENTIFICATION BY MASS SPECTROMETRY [LARGE SCALE ANALYSIS]</scope>
    <source>
        <strain>ATCC 25618 / H37Rv</strain>
    </source>
</reference>
<dbReference type="EMBL" id="AL123456">
    <property type="protein sequence ID" value="CCP43780.1"/>
    <property type="molecule type" value="Genomic_DNA"/>
</dbReference>
<dbReference type="PIR" id="H70623">
    <property type="entry name" value="H70623"/>
</dbReference>
<dbReference type="RefSeq" id="NP_215545.1">
    <property type="nucleotide sequence ID" value="NC_000962.3"/>
</dbReference>
<dbReference type="RefSeq" id="WP_003405318.1">
    <property type="nucleotide sequence ID" value="NZ_NVQJ01000018.1"/>
</dbReference>
<dbReference type="SMR" id="P9WKF3"/>
<dbReference type="FunCoup" id="P9WKF3">
    <property type="interactions" value="58"/>
</dbReference>
<dbReference type="STRING" id="83332.Rv1029"/>
<dbReference type="PaxDb" id="83332-Rv1029"/>
<dbReference type="DNASU" id="887414"/>
<dbReference type="GeneID" id="887414"/>
<dbReference type="KEGG" id="mtu:Rv1029"/>
<dbReference type="KEGG" id="mtv:RVBD_1029"/>
<dbReference type="TubercuList" id="Rv1029"/>
<dbReference type="eggNOG" id="COG2060">
    <property type="taxonomic scope" value="Bacteria"/>
</dbReference>
<dbReference type="InParanoid" id="P9WKF3"/>
<dbReference type="OrthoDB" id="9763796at2"/>
<dbReference type="PhylomeDB" id="P9WKF3"/>
<dbReference type="Proteomes" id="UP000001584">
    <property type="component" value="Chromosome"/>
</dbReference>
<dbReference type="GO" id="GO:0009274">
    <property type="term" value="C:peptidoglycan-based cell wall"/>
    <property type="evidence" value="ECO:0007005"/>
    <property type="project" value="MTBBASE"/>
</dbReference>
<dbReference type="GO" id="GO:0005886">
    <property type="term" value="C:plasma membrane"/>
    <property type="evidence" value="ECO:0000318"/>
    <property type="project" value="GO_Central"/>
</dbReference>
<dbReference type="GO" id="GO:0008556">
    <property type="term" value="F:P-type potassium transmembrane transporter activity"/>
    <property type="evidence" value="ECO:0000318"/>
    <property type="project" value="GO_Central"/>
</dbReference>
<dbReference type="GO" id="GO:0030955">
    <property type="term" value="F:potassium ion binding"/>
    <property type="evidence" value="ECO:0007669"/>
    <property type="project" value="UniProtKB-UniRule"/>
</dbReference>
<dbReference type="GO" id="GO:0071805">
    <property type="term" value="P:potassium ion transmembrane transport"/>
    <property type="evidence" value="ECO:0000318"/>
    <property type="project" value="GO_Central"/>
</dbReference>
<dbReference type="HAMAP" id="MF_00275">
    <property type="entry name" value="KdpA"/>
    <property type="match status" value="1"/>
</dbReference>
<dbReference type="InterPro" id="IPR004623">
    <property type="entry name" value="KdpA"/>
</dbReference>
<dbReference type="NCBIfam" id="TIGR00680">
    <property type="entry name" value="kdpA"/>
    <property type="match status" value="1"/>
</dbReference>
<dbReference type="PANTHER" id="PTHR30607">
    <property type="entry name" value="POTASSIUM-TRANSPORTING ATPASE A CHAIN"/>
    <property type="match status" value="1"/>
</dbReference>
<dbReference type="PANTHER" id="PTHR30607:SF2">
    <property type="entry name" value="POTASSIUM-TRANSPORTING ATPASE POTASSIUM-BINDING SUBUNIT"/>
    <property type="match status" value="1"/>
</dbReference>
<dbReference type="Pfam" id="PF03814">
    <property type="entry name" value="KdpA"/>
    <property type="match status" value="1"/>
</dbReference>
<dbReference type="PIRSF" id="PIRSF001294">
    <property type="entry name" value="K_ATPaseA"/>
    <property type="match status" value="1"/>
</dbReference>
<name>KDPA_MYCTU</name>
<sequence>MSGTSWLQFAALIAVLLLTAPALGGYLAKIYGDEAKKPGDRVFGPIERVIYQVCRVDPGSEQRWSTYALSVLAFSVMSFLLLYGIARFQGVLPFNPTDKPAVTDHVAFNAAVSFMTNTNWQSYSGEATMSHFTQMTGLAVQNFVSASAGMCVLAALIRGLARKRASTLGNFWVDLARTVLRIMFPLSFVVAILLVSQGVIQNLHGFIVANTLEGAPQLIPGGPVASQVAIKQLGTNGGGFFNVNSAHPFENYTPIGNFVENWAILIIPFALCFAFGKMVHDRRQGWAVLAIMGIIWIGMSVAAMSFEAKGNPRLDALGVTQQTTVDQSGGNLEGKEVRFGVGASGLWAASTTGTSNGSVNSMHDSYTPLGGMVPLAHMMLGEVSPGGTGVGLNGLLVMAILAVFIAGLMVGRTPEYLGKKIQATEMKLVTLYILAMPIALLSFAAASVLISSALASRNNPGPHGLSEILYAYTSGANNNGSAFAGLTASTWSYDTTIGVAMLIGRFFLIIPVLAIAGSLARKGTTPVTAATFPTHKPLFVGLVIGVVLIVGGLTFFPALALGPIVEQLSTQ</sequence>
<comment type="function">
    <text evidence="1">Part of the high-affinity ATP-driven potassium transport (or Kdp) system, which catalyzes the hydrolysis of ATP coupled with the electrogenic transport of potassium into the cytoplasm. This subunit binds the extracellular potassium ions and delivers the ions to the membrane domain of KdpB through an intramembrane tunnel.</text>
</comment>
<comment type="subunit">
    <text evidence="1">The system is composed of three essential subunits: KdpA, KdpB and KdpC.</text>
</comment>
<comment type="subcellular location">
    <subcellularLocation>
        <location evidence="1">Cell membrane</location>
        <topology evidence="1">Multi-pass membrane protein</topology>
    </subcellularLocation>
</comment>
<comment type="similarity">
    <text evidence="1">Belongs to the KdpA family.</text>
</comment>